<gene>
    <name evidence="1" type="primary">yeaL</name>
    <name type="ordered locus">SPAB_02069</name>
</gene>
<name>YEAL_SALPB</name>
<sequence length="148" mass="15344">MFDVTLLILLGLAALGFISHNTTVAVSILVLIIVRVTPLNTFFPWIEKQGLTVGIIILTIGVMAPIASGTLPPSTLIHSFVNWKSLVAIAVGVFVSWLGGRGITLMGNQPQLVAGLLVGTVLGVALFRGVPVGPLIAAGLVSLIVGKQ</sequence>
<protein>
    <recommendedName>
        <fullName evidence="1">UPF0756 membrane protein YeaL</fullName>
    </recommendedName>
</protein>
<proteinExistence type="inferred from homology"/>
<accession>A9N2A7</accession>
<evidence type="ECO:0000255" key="1">
    <source>
        <dbReference type="HAMAP-Rule" id="MF_01874"/>
    </source>
</evidence>
<organism>
    <name type="scientific">Salmonella paratyphi B (strain ATCC BAA-1250 / SPB7)</name>
    <dbReference type="NCBI Taxonomy" id="1016998"/>
    <lineage>
        <taxon>Bacteria</taxon>
        <taxon>Pseudomonadati</taxon>
        <taxon>Pseudomonadota</taxon>
        <taxon>Gammaproteobacteria</taxon>
        <taxon>Enterobacterales</taxon>
        <taxon>Enterobacteriaceae</taxon>
        <taxon>Salmonella</taxon>
    </lineage>
</organism>
<dbReference type="EMBL" id="CP000886">
    <property type="protein sequence ID" value="ABX67455.1"/>
    <property type="molecule type" value="Genomic_DNA"/>
</dbReference>
<dbReference type="RefSeq" id="WP_000460698.1">
    <property type="nucleotide sequence ID" value="NC_010102.1"/>
</dbReference>
<dbReference type="KEGG" id="spq:SPAB_02069"/>
<dbReference type="PATRIC" id="fig|1016998.12.peg.1957"/>
<dbReference type="HOGENOM" id="CLU_125889_0_0_6"/>
<dbReference type="BioCyc" id="SENT1016998:SPAB_RS08445-MONOMER"/>
<dbReference type="Proteomes" id="UP000008556">
    <property type="component" value="Chromosome"/>
</dbReference>
<dbReference type="GO" id="GO:0005886">
    <property type="term" value="C:plasma membrane"/>
    <property type="evidence" value="ECO:0007669"/>
    <property type="project" value="UniProtKB-SubCell"/>
</dbReference>
<dbReference type="HAMAP" id="MF_01874">
    <property type="entry name" value="UPF0756"/>
    <property type="match status" value="1"/>
</dbReference>
<dbReference type="InterPro" id="IPR007382">
    <property type="entry name" value="UPF0756_TM"/>
</dbReference>
<dbReference type="PANTHER" id="PTHR38452">
    <property type="entry name" value="UPF0756 MEMBRANE PROTEIN YEAL"/>
    <property type="match status" value="1"/>
</dbReference>
<dbReference type="PANTHER" id="PTHR38452:SF1">
    <property type="entry name" value="UPF0756 MEMBRANE PROTEIN YEAL"/>
    <property type="match status" value="1"/>
</dbReference>
<dbReference type="Pfam" id="PF04284">
    <property type="entry name" value="DUF441"/>
    <property type="match status" value="1"/>
</dbReference>
<comment type="subcellular location">
    <subcellularLocation>
        <location evidence="1">Cell membrane</location>
        <topology evidence="1">Multi-pass membrane protein</topology>
    </subcellularLocation>
</comment>
<comment type="similarity">
    <text evidence="1">Belongs to the UPF0756 family.</text>
</comment>
<feature type="chain" id="PRO_0000388930" description="UPF0756 membrane protein YeaL">
    <location>
        <begin position="1"/>
        <end position="148"/>
    </location>
</feature>
<feature type="transmembrane region" description="Helical" evidence="1">
    <location>
        <begin position="14"/>
        <end position="34"/>
    </location>
</feature>
<feature type="transmembrane region" description="Helical" evidence="1">
    <location>
        <begin position="51"/>
        <end position="71"/>
    </location>
</feature>
<feature type="transmembrane region" description="Helical" evidence="1">
    <location>
        <begin position="86"/>
        <end position="106"/>
    </location>
</feature>
<feature type="transmembrane region" description="Helical" evidence="1">
    <location>
        <begin position="121"/>
        <end position="141"/>
    </location>
</feature>
<keyword id="KW-1003">Cell membrane</keyword>
<keyword id="KW-0472">Membrane</keyword>
<keyword id="KW-0812">Transmembrane</keyword>
<keyword id="KW-1133">Transmembrane helix</keyword>
<reference key="1">
    <citation type="submission" date="2007-11" db="EMBL/GenBank/DDBJ databases">
        <authorList>
            <consortium name="The Salmonella enterica serovar Paratyphi B Genome Sequencing Project"/>
            <person name="McClelland M."/>
            <person name="Sanderson E.K."/>
            <person name="Porwollik S."/>
            <person name="Spieth J."/>
            <person name="Clifton W.S."/>
            <person name="Fulton R."/>
            <person name="Cordes M."/>
            <person name="Wollam A."/>
            <person name="Shah N."/>
            <person name="Pepin K."/>
            <person name="Bhonagiri V."/>
            <person name="Nash W."/>
            <person name="Johnson M."/>
            <person name="Thiruvilangam P."/>
            <person name="Wilson R."/>
        </authorList>
    </citation>
    <scope>NUCLEOTIDE SEQUENCE [LARGE SCALE GENOMIC DNA]</scope>
    <source>
        <strain>ATCC BAA-1250 / SPB7</strain>
    </source>
</reference>